<protein>
    <recommendedName>
        <fullName evidence="1">NADH-quinone oxidoreductase subunit I</fullName>
        <ecNumber evidence="1">7.1.1.-</ecNumber>
    </recommendedName>
    <alternativeName>
        <fullName evidence="1">NADH dehydrogenase I subunit I</fullName>
    </alternativeName>
    <alternativeName>
        <fullName evidence="1">NDH-1 subunit I</fullName>
    </alternativeName>
</protein>
<reference key="1">
    <citation type="journal article" date="2011" name="Stand. Genomic Sci.">
        <title>Complete genome sequence of Rhodospirillum rubrum type strain (S1).</title>
        <authorList>
            <person name="Munk A.C."/>
            <person name="Copeland A."/>
            <person name="Lucas S."/>
            <person name="Lapidus A."/>
            <person name="Del Rio T.G."/>
            <person name="Barry K."/>
            <person name="Detter J.C."/>
            <person name="Hammon N."/>
            <person name="Israni S."/>
            <person name="Pitluck S."/>
            <person name="Brettin T."/>
            <person name="Bruce D."/>
            <person name="Han C."/>
            <person name="Tapia R."/>
            <person name="Gilna P."/>
            <person name="Schmutz J."/>
            <person name="Larimer F."/>
            <person name="Land M."/>
            <person name="Kyrpides N.C."/>
            <person name="Mavromatis K."/>
            <person name="Richardson P."/>
            <person name="Rohde M."/>
            <person name="Goeker M."/>
            <person name="Klenk H.P."/>
            <person name="Zhang Y."/>
            <person name="Roberts G.P."/>
            <person name="Reslewic S."/>
            <person name="Schwartz D.C."/>
        </authorList>
    </citation>
    <scope>NUCLEOTIDE SEQUENCE [LARGE SCALE GENOMIC DNA]</scope>
    <source>
        <strain>ATCC 11170 / ATH 1.1.1 / DSM 467 / LMG 4362 / NCIMB 8255 / S1</strain>
    </source>
</reference>
<comment type="function">
    <text evidence="1">NDH-1 shuttles electrons from NADH, via FMN and iron-sulfur (Fe-S) centers, to quinones in the respiratory chain. The immediate electron acceptor for the enzyme in this species is believed to be ubiquinone. Couples the redox reaction to proton translocation (for every two electrons transferred, four hydrogen ions are translocated across the cytoplasmic membrane), and thus conserves the redox energy in a proton gradient.</text>
</comment>
<comment type="catalytic activity">
    <reaction evidence="1">
        <text>a quinone + NADH + 5 H(+)(in) = a quinol + NAD(+) + 4 H(+)(out)</text>
        <dbReference type="Rhea" id="RHEA:57888"/>
        <dbReference type="ChEBI" id="CHEBI:15378"/>
        <dbReference type="ChEBI" id="CHEBI:24646"/>
        <dbReference type="ChEBI" id="CHEBI:57540"/>
        <dbReference type="ChEBI" id="CHEBI:57945"/>
        <dbReference type="ChEBI" id="CHEBI:132124"/>
    </reaction>
</comment>
<comment type="cofactor">
    <cofactor evidence="1">
        <name>[4Fe-4S] cluster</name>
        <dbReference type="ChEBI" id="CHEBI:49883"/>
    </cofactor>
    <text evidence="1">Binds 2 [4Fe-4S] clusters per subunit.</text>
</comment>
<comment type="subunit">
    <text evidence="1">NDH-1 is composed of 14 different subunits. Subunits NuoA, H, J, K, L, M, N constitute the membrane sector of the complex.</text>
</comment>
<comment type="subcellular location">
    <subcellularLocation>
        <location evidence="1">Cell inner membrane</location>
        <topology evidence="1">Peripheral membrane protein</topology>
    </subcellularLocation>
</comment>
<comment type="similarity">
    <text evidence="1">Belongs to the complex I 23 kDa subunit family.</text>
</comment>
<sequence length="162" mass="18645">MTSIVRTLRSLTLWELVSGMALTFRYMLKPKVTINYPFEKGYLSPRFRGEHALRRYANGEERCIACKLCEAICPAQAITIEAEPRTDGSRRTTRYDIDMTKCIYCGFCEEACPVDAIVEGPNFEFAAETREELLYNKAKLLANGDRWEPELALRLRKDAAYR</sequence>
<keyword id="KW-0004">4Fe-4S</keyword>
<keyword id="KW-0997">Cell inner membrane</keyword>
<keyword id="KW-1003">Cell membrane</keyword>
<keyword id="KW-0408">Iron</keyword>
<keyword id="KW-0411">Iron-sulfur</keyword>
<keyword id="KW-0472">Membrane</keyword>
<keyword id="KW-0479">Metal-binding</keyword>
<keyword id="KW-0520">NAD</keyword>
<keyword id="KW-0874">Quinone</keyword>
<keyword id="KW-1185">Reference proteome</keyword>
<keyword id="KW-0677">Repeat</keyword>
<keyword id="KW-1278">Translocase</keyword>
<keyword id="KW-0830">Ubiquinone</keyword>
<accession>Q2RU32</accession>
<name>NUOI_RHORT</name>
<organism>
    <name type="scientific">Rhodospirillum rubrum (strain ATCC 11170 / ATH 1.1.1 / DSM 467 / LMG 4362 / NCIMB 8255 / S1)</name>
    <dbReference type="NCBI Taxonomy" id="269796"/>
    <lineage>
        <taxon>Bacteria</taxon>
        <taxon>Pseudomonadati</taxon>
        <taxon>Pseudomonadota</taxon>
        <taxon>Alphaproteobacteria</taxon>
        <taxon>Rhodospirillales</taxon>
        <taxon>Rhodospirillaceae</taxon>
        <taxon>Rhodospirillum</taxon>
    </lineage>
</organism>
<dbReference type="EC" id="7.1.1.-" evidence="1"/>
<dbReference type="EMBL" id="CP000230">
    <property type="protein sequence ID" value="ABC22363.1"/>
    <property type="molecule type" value="Genomic_DNA"/>
</dbReference>
<dbReference type="RefSeq" id="WP_011389438.1">
    <property type="nucleotide sequence ID" value="NC_007643.1"/>
</dbReference>
<dbReference type="RefSeq" id="YP_426650.1">
    <property type="nucleotide sequence ID" value="NC_007643.1"/>
</dbReference>
<dbReference type="SMR" id="Q2RU32"/>
<dbReference type="STRING" id="269796.Rru_A1563"/>
<dbReference type="EnsemblBacteria" id="ABC22363">
    <property type="protein sequence ID" value="ABC22363"/>
    <property type="gene ID" value="Rru_A1563"/>
</dbReference>
<dbReference type="KEGG" id="rru:Rru_A1563"/>
<dbReference type="PATRIC" id="fig|269796.9.peg.1636"/>
<dbReference type="eggNOG" id="COG1143">
    <property type="taxonomic scope" value="Bacteria"/>
</dbReference>
<dbReference type="HOGENOM" id="CLU_067218_5_1_5"/>
<dbReference type="PhylomeDB" id="Q2RU32"/>
<dbReference type="Proteomes" id="UP000001929">
    <property type="component" value="Chromosome"/>
</dbReference>
<dbReference type="GO" id="GO:0005886">
    <property type="term" value="C:plasma membrane"/>
    <property type="evidence" value="ECO:0007669"/>
    <property type="project" value="UniProtKB-SubCell"/>
</dbReference>
<dbReference type="GO" id="GO:0051539">
    <property type="term" value="F:4 iron, 4 sulfur cluster binding"/>
    <property type="evidence" value="ECO:0007669"/>
    <property type="project" value="UniProtKB-KW"/>
</dbReference>
<dbReference type="GO" id="GO:0005506">
    <property type="term" value="F:iron ion binding"/>
    <property type="evidence" value="ECO:0007669"/>
    <property type="project" value="UniProtKB-UniRule"/>
</dbReference>
<dbReference type="GO" id="GO:0050136">
    <property type="term" value="F:NADH:ubiquinone reductase (non-electrogenic) activity"/>
    <property type="evidence" value="ECO:0007669"/>
    <property type="project" value="UniProtKB-UniRule"/>
</dbReference>
<dbReference type="GO" id="GO:0048038">
    <property type="term" value="F:quinone binding"/>
    <property type="evidence" value="ECO:0007669"/>
    <property type="project" value="UniProtKB-KW"/>
</dbReference>
<dbReference type="GO" id="GO:0009060">
    <property type="term" value="P:aerobic respiration"/>
    <property type="evidence" value="ECO:0007669"/>
    <property type="project" value="TreeGrafter"/>
</dbReference>
<dbReference type="FunFam" id="3.30.70.3270:FF:000001">
    <property type="entry name" value="NADH-quinone oxidoreductase subunit I 1"/>
    <property type="match status" value="1"/>
</dbReference>
<dbReference type="Gene3D" id="3.30.70.3270">
    <property type="match status" value="1"/>
</dbReference>
<dbReference type="HAMAP" id="MF_01351">
    <property type="entry name" value="NDH1_NuoI"/>
    <property type="match status" value="1"/>
</dbReference>
<dbReference type="InterPro" id="IPR017896">
    <property type="entry name" value="4Fe4S_Fe-S-bd"/>
</dbReference>
<dbReference type="InterPro" id="IPR017900">
    <property type="entry name" value="4Fe4S_Fe_S_CS"/>
</dbReference>
<dbReference type="InterPro" id="IPR010226">
    <property type="entry name" value="NADH_quinone_OxRdtase_chainI"/>
</dbReference>
<dbReference type="NCBIfam" id="TIGR01971">
    <property type="entry name" value="NuoI"/>
    <property type="match status" value="1"/>
</dbReference>
<dbReference type="NCBIfam" id="NF004538">
    <property type="entry name" value="PRK05888.1-4"/>
    <property type="match status" value="1"/>
</dbReference>
<dbReference type="NCBIfam" id="NF004539">
    <property type="entry name" value="PRK05888.1-5"/>
    <property type="match status" value="1"/>
</dbReference>
<dbReference type="PANTHER" id="PTHR10849:SF20">
    <property type="entry name" value="NADH DEHYDROGENASE [UBIQUINONE] IRON-SULFUR PROTEIN 8, MITOCHONDRIAL"/>
    <property type="match status" value="1"/>
</dbReference>
<dbReference type="PANTHER" id="PTHR10849">
    <property type="entry name" value="NADH DEHYDROGENASE UBIQUINONE IRON-SULFUR PROTEIN 8, MITOCHONDRIAL"/>
    <property type="match status" value="1"/>
</dbReference>
<dbReference type="Pfam" id="PF12838">
    <property type="entry name" value="Fer4_7"/>
    <property type="match status" value="1"/>
</dbReference>
<dbReference type="SUPFAM" id="SSF54862">
    <property type="entry name" value="4Fe-4S ferredoxins"/>
    <property type="match status" value="1"/>
</dbReference>
<dbReference type="PROSITE" id="PS00198">
    <property type="entry name" value="4FE4S_FER_1"/>
    <property type="match status" value="2"/>
</dbReference>
<dbReference type="PROSITE" id="PS51379">
    <property type="entry name" value="4FE4S_FER_2"/>
    <property type="match status" value="2"/>
</dbReference>
<proteinExistence type="inferred from homology"/>
<evidence type="ECO:0000255" key="1">
    <source>
        <dbReference type="HAMAP-Rule" id="MF_01351"/>
    </source>
</evidence>
<gene>
    <name evidence="1" type="primary">nuoI</name>
    <name type="ordered locus">Rru_A1563</name>
</gene>
<feature type="chain" id="PRO_0000250942" description="NADH-quinone oxidoreductase subunit I">
    <location>
        <begin position="1"/>
        <end position="162"/>
    </location>
</feature>
<feature type="domain" description="4Fe-4S ferredoxin-type 1" evidence="1">
    <location>
        <begin position="53"/>
        <end position="83"/>
    </location>
</feature>
<feature type="domain" description="4Fe-4S ferredoxin-type 2" evidence="1">
    <location>
        <begin position="93"/>
        <end position="122"/>
    </location>
</feature>
<feature type="binding site" evidence="1">
    <location>
        <position position="63"/>
    </location>
    <ligand>
        <name>[4Fe-4S] cluster</name>
        <dbReference type="ChEBI" id="CHEBI:49883"/>
        <label>1</label>
    </ligand>
</feature>
<feature type="binding site" evidence="1">
    <location>
        <position position="66"/>
    </location>
    <ligand>
        <name>[4Fe-4S] cluster</name>
        <dbReference type="ChEBI" id="CHEBI:49883"/>
        <label>1</label>
    </ligand>
</feature>
<feature type="binding site" evidence="1">
    <location>
        <position position="69"/>
    </location>
    <ligand>
        <name>[4Fe-4S] cluster</name>
        <dbReference type="ChEBI" id="CHEBI:49883"/>
        <label>1</label>
    </ligand>
</feature>
<feature type="binding site" evidence="1">
    <location>
        <position position="73"/>
    </location>
    <ligand>
        <name>[4Fe-4S] cluster</name>
        <dbReference type="ChEBI" id="CHEBI:49883"/>
        <label>2</label>
    </ligand>
</feature>
<feature type="binding site" evidence="1">
    <location>
        <position position="102"/>
    </location>
    <ligand>
        <name>[4Fe-4S] cluster</name>
        <dbReference type="ChEBI" id="CHEBI:49883"/>
        <label>2</label>
    </ligand>
</feature>
<feature type="binding site" evidence="1">
    <location>
        <position position="105"/>
    </location>
    <ligand>
        <name>[4Fe-4S] cluster</name>
        <dbReference type="ChEBI" id="CHEBI:49883"/>
        <label>2</label>
    </ligand>
</feature>
<feature type="binding site" evidence="1">
    <location>
        <position position="108"/>
    </location>
    <ligand>
        <name>[4Fe-4S] cluster</name>
        <dbReference type="ChEBI" id="CHEBI:49883"/>
        <label>2</label>
    </ligand>
</feature>
<feature type="binding site" evidence="1">
    <location>
        <position position="112"/>
    </location>
    <ligand>
        <name>[4Fe-4S] cluster</name>
        <dbReference type="ChEBI" id="CHEBI:49883"/>
        <label>1</label>
    </ligand>
</feature>